<gene>
    <name evidence="1" type="primary">glsA</name>
    <name type="ordered locus">Clos_2008</name>
</gene>
<reference key="1">
    <citation type="submission" date="2007-10" db="EMBL/GenBank/DDBJ databases">
        <title>Complete genome of Alkaliphilus oremlandii OhILAs.</title>
        <authorList>
            <person name="Copeland A."/>
            <person name="Lucas S."/>
            <person name="Lapidus A."/>
            <person name="Barry K."/>
            <person name="Detter J.C."/>
            <person name="Glavina del Rio T."/>
            <person name="Hammon N."/>
            <person name="Israni S."/>
            <person name="Dalin E."/>
            <person name="Tice H."/>
            <person name="Pitluck S."/>
            <person name="Chain P."/>
            <person name="Malfatti S."/>
            <person name="Shin M."/>
            <person name="Vergez L."/>
            <person name="Schmutz J."/>
            <person name="Larimer F."/>
            <person name="Land M."/>
            <person name="Hauser L."/>
            <person name="Kyrpides N."/>
            <person name="Mikhailova N."/>
            <person name="Stolz J.F."/>
            <person name="Dawson A."/>
            <person name="Fisher E."/>
            <person name="Crable B."/>
            <person name="Perera E."/>
            <person name="Lisak J."/>
            <person name="Ranganathan M."/>
            <person name="Basu P."/>
            <person name="Richardson P."/>
        </authorList>
    </citation>
    <scope>NUCLEOTIDE SEQUENCE [LARGE SCALE GENOMIC DNA]</scope>
    <source>
        <strain>OhILAs</strain>
    </source>
</reference>
<organism>
    <name type="scientific">Alkaliphilus oremlandii (strain OhILAs)</name>
    <name type="common">Clostridium oremlandii (strain OhILAs)</name>
    <dbReference type="NCBI Taxonomy" id="350688"/>
    <lineage>
        <taxon>Bacteria</taxon>
        <taxon>Bacillati</taxon>
        <taxon>Bacillota</taxon>
        <taxon>Clostridia</taxon>
        <taxon>Peptostreptococcales</taxon>
        <taxon>Natronincolaceae</taxon>
        <taxon>Alkaliphilus</taxon>
    </lineage>
</organism>
<accession>A8MIB3</accession>
<sequence length="305" mass="33308">MQIELEKILNQNREKIAFGNLPTYIPELTRANKDALGIYISQLDGSEFKAGDYDYKFTIQSISKVITLIMALEDWGAEYIFECVGKEPTGDAFNSMMKLEIVRPSKPFNPMINAGAIAVTSKIKGKSPEERIQRIMDFFKLVTGNPDLKVNESIYMSEKSTGDRNRAMAYFMKDVGVITGDVEENLDLYFKQCSIEVTCKDIARIGLFLSSDGVLLETGKQIINPKHSKIAKALMTTCGMYNASGEFAINVGIPAKSGVGGGIMAVVPGKMGIGVIGPSLDEKGNSIAGVGVLEQLSKMLELSIF</sequence>
<evidence type="ECO:0000255" key="1">
    <source>
        <dbReference type="HAMAP-Rule" id="MF_00313"/>
    </source>
</evidence>
<protein>
    <recommendedName>
        <fullName evidence="1">Glutaminase</fullName>
        <ecNumber evidence="1">3.5.1.2</ecNumber>
    </recommendedName>
</protein>
<keyword id="KW-0378">Hydrolase</keyword>
<keyword id="KW-1185">Reference proteome</keyword>
<feature type="chain" id="PRO_0000336022" description="Glutaminase">
    <location>
        <begin position="1"/>
        <end position="305"/>
    </location>
</feature>
<feature type="binding site" evidence="1">
    <location>
        <position position="61"/>
    </location>
    <ligand>
        <name>substrate</name>
    </ligand>
</feature>
<feature type="binding site" evidence="1">
    <location>
        <position position="113"/>
    </location>
    <ligand>
        <name>substrate</name>
    </ligand>
</feature>
<feature type="binding site" evidence="1">
    <location>
        <position position="158"/>
    </location>
    <ligand>
        <name>substrate</name>
    </ligand>
</feature>
<feature type="binding site" evidence="1">
    <location>
        <position position="165"/>
    </location>
    <ligand>
        <name>substrate</name>
    </ligand>
</feature>
<feature type="binding site" evidence="1">
    <location>
        <position position="189"/>
    </location>
    <ligand>
        <name>substrate</name>
    </ligand>
</feature>
<feature type="binding site" evidence="1">
    <location>
        <position position="241"/>
    </location>
    <ligand>
        <name>substrate</name>
    </ligand>
</feature>
<feature type="binding site" evidence="1">
    <location>
        <position position="259"/>
    </location>
    <ligand>
        <name>substrate</name>
    </ligand>
</feature>
<comment type="catalytic activity">
    <reaction evidence="1">
        <text>L-glutamine + H2O = L-glutamate + NH4(+)</text>
        <dbReference type="Rhea" id="RHEA:15889"/>
        <dbReference type="ChEBI" id="CHEBI:15377"/>
        <dbReference type="ChEBI" id="CHEBI:28938"/>
        <dbReference type="ChEBI" id="CHEBI:29985"/>
        <dbReference type="ChEBI" id="CHEBI:58359"/>
        <dbReference type="EC" id="3.5.1.2"/>
    </reaction>
</comment>
<comment type="subunit">
    <text evidence="1">Homotetramer.</text>
</comment>
<comment type="similarity">
    <text evidence="1">Belongs to the glutaminase family.</text>
</comment>
<name>GLSA_ALKOO</name>
<dbReference type="EC" id="3.5.1.2" evidence="1"/>
<dbReference type="EMBL" id="CP000853">
    <property type="protein sequence ID" value="ABW19545.1"/>
    <property type="molecule type" value="Genomic_DNA"/>
</dbReference>
<dbReference type="RefSeq" id="WP_012159854.1">
    <property type="nucleotide sequence ID" value="NC_009922.1"/>
</dbReference>
<dbReference type="SMR" id="A8MIB3"/>
<dbReference type="STRING" id="350688.Clos_2008"/>
<dbReference type="KEGG" id="aoe:Clos_2008"/>
<dbReference type="eggNOG" id="COG2066">
    <property type="taxonomic scope" value="Bacteria"/>
</dbReference>
<dbReference type="HOGENOM" id="CLU_027932_1_1_9"/>
<dbReference type="OrthoDB" id="9788822at2"/>
<dbReference type="Proteomes" id="UP000000269">
    <property type="component" value="Chromosome"/>
</dbReference>
<dbReference type="GO" id="GO:0004359">
    <property type="term" value="F:glutaminase activity"/>
    <property type="evidence" value="ECO:0007669"/>
    <property type="project" value="UniProtKB-UniRule"/>
</dbReference>
<dbReference type="GO" id="GO:0006537">
    <property type="term" value="P:glutamate biosynthetic process"/>
    <property type="evidence" value="ECO:0007669"/>
    <property type="project" value="TreeGrafter"/>
</dbReference>
<dbReference type="GO" id="GO:0006543">
    <property type="term" value="P:glutamine catabolic process"/>
    <property type="evidence" value="ECO:0007669"/>
    <property type="project" value="TreeGrafter"/>
</dbReference>
<dbReference type="FunFam" id="3.40.710.10:FF:000005">
    <property type="entry name" value="Glutaminase"/>
    <property type="match status" value="1"/>
</dbReference>
<dbReference type="Gene3D" id="3.40.710.10">
    <property type="entry name" value="DD-peptidase/beta-lactamase superfamily"/>
    <property type="match status" value="1"/>
</dbReference>
<dbReference type="HAMAP" id="MF_00313">
    <property type="entry name" value="Glutaminase"/>
    <property type="match status" value="1"/>
</dbReference>
<dbReference type="InterPro" id="IPR012338">
    <property type="entry name" value="Beta-lactam/transpept-like"/>
</dbReference>
<dbReference type="InterPro" id="IPR015868">
    <property type="entry name" value="Glutaminase"/>
</dbReference>
<dbReference type="NCBIfam" id="TIGR03814">
    <property type="entry name" value="Gln_ase"/>
    <property type="match status" value="1"/>
</dbReference>
<dbReference type="PANTHER" id="PTHR12544">
    <property type="entry name" value="GLUTAMINASE"/>
    <property type="match status" value="1"/>
</dbReference>
<dbReference type="PANTHER" id="PTHR12544:SF29">
    <property type="entry name" value="GLUTAMINASE"/>
    <property type="match status" value="1"/>
</dbReference>
<dbReference type="Pfam" id="PF04960">
    <property type="entry name" value="Glutaminase"/>
    <property type="match status" value="1"/>
</dbReference>
<dbReference type="SUPFAM" id="SSF56601">
    <property type="entry name" value="beta-lactamase/transpeptidase-like"/>
    <property type="match status" value="1"/>
</dbReference>
<proteinExistence type="inferred from homology"/>